<keyword id="KW-0119">Carbohydrate metabolism</keyword>
<keyword id="KW-0413">Isomerase</keyword>
<keyword id="KW-0521">NADP</keyword>
<feature type="chain" id="PRO_0000429788" description="ADP-L-glycero-D-manno-heptose-6-epimerase">
    <location>
        <begin position="1"/>
        <end position="330"/>
    </location>
</feature>
<feature type="active site" description="Proton acceptor" evidence="1">
    <location>
        <position position="139"/>
    </location>
</feature>
<feature type="active site" description="Proton acceptor" evidence="1">
    <location>
        <position position="177"/>
    </location>
</feature>
<feature type="binding site" evidence="1">
    <location>
        <begin position="11"/>
        <end position="12"/>
    </location>
    <ligand>
        <name>NADP(+)</name>
        <dbReference type="ChEBI" id="CHEBI:58349"/>
    </ligand>
</feature>
<feature type="binding site" evidence="1">
    <location>
        <begin position="32"/>
        <end position="33"/>
    </location>
    <ligand>
        <name>NADP(+)</name>
        <dbReference type="ChEBI" id="CHEBI:58349"/>
    </ligand>
</feature>
<feature type="binding site" evidence="1">
    <location>
        <position position="39"/>
    </location>
    <ligand>
        <name>NADP(+)</name>
        <dbReference type="ChEBI" id="CHEBI:58349"/>
    </ligand>
</feature>
<feature type="binding site" evidence="1">
    <location>
        <position position="54"/>
    </location>
    <ligand>
        <name>NADP(+)</name>
        <dbReference type="ChEBI" id="CHEBI:58349"/>
    </ligand>
</feature>
<feature type="binding site" evidence="1">
    <location>
        <begin position="75"/>
        <end position="79"/>
    </location>
    <ligand>
        <name>NADP(+)</name>
        <dbReference type="ChEBI" id="CHEBI:58349"/>
    </ligand>
</feature>
<feature type="binding site" evidence="1">
    <location>
        <position position="92"/>
    </location>
    <ligand>
        <name>NADP(+)</name>
        <dbReference type="ChEBI" id="CHEBI:58349"/>
    </ligand>
</feature>
<feature type="binding site" evidence="1">
    <location>
        <position position="143"/>
    </location>
    <ligand>
        <name>NADP(+)</name>
        <dbReference type="ChEBI" id="CHEBI:58349"/>
    </ligand>
</feature>
<feature type="binding site" evidence="1">
    <location>
        <position position="168"/>
    </location>
    <ligand>
        <name>substrate</name>
    </ligand>
</feature>
<feature type="binding site" evidence="1">
    <location>
        <position position="169"/>
    </location>
    <ligand>
        <name>NADP(+)</name>
        <dbReference type="ChEBI" id="CHEBI:58349"/>
    </ligand>
</feature>
<feature type="binding site" evidence="1">
    <location>
        <position position="177"/>
    </location>
    <ligand>
        <name>NADP(+)</name>
        <dbReference type="ChEBI" id="CHEBI:58349"/>
    </ligand>
</feature>
<feature type="binding site" evidence="1">
    <location>
        <position position="179"/>
    </location>
    <ligand>
        <name>substrate</name>
    </ligand>
</feature>
<feature type="binding site" evidence="1">
    <location>
        <position position="186"/>
    </location>
    <ligand>
        <name>substrate</name>
    </ligand>
</feature>
<feature type="binding site" evidence="1">
    <location>
        <begin position="200"/>
        <end position="203"/>
    </location>
    <ligand>
        <name>substrate</name>
    </ligand>
</feature>
<feature type="binding site" evidence="1">
    <location>
        <position position="213"/>
    </location>
    <ligand>
        <name>substrate</name>
    </ligand>
</feature>
<feature type="binding site" evidence="1">
    <location>
        <position position="292"/>
    </location>
    <ligand>
        <name>substrate</name>
    </ligand>
</feature>
<organism>
    <name type="scientific">Burkholderia pseudomallei (strain 1026b)</name>
    <dbReference type="NCBI Taxonomy" id="884204"/>
    <lineage>
        <taxon>Bacteria</taxon>
        <taxon>Pseudomonadati</taxon>
        <taxon>Pseudomonadota</taxon>
        <taxon>Betaproteobacteria</taxon>
        <taxon>Burkholderiales</taxon>
        <taxon>Burkholderiaceae</taxon>
        <taxon>Burkholderia</taxon>
        <taxon>pseudomallei group</taxon>
    </lineage>
</organism>
<accession>I1WGR6</accession>
<accession>Q63S12</accession>
<accession>Q9WWX6</accession>
<name>HLDD_BURP2</name>
<proteinExistence type="inferred from homology"/>
<reference key="1">
    <citation type="journal article" date="1999" name="Antimicrob. Agents Chemother.">
        <title>Isolation of polymyxin B-susceptible mutants of Burkholderia pseudomallei and molecular characterization of genetic loci involved in polymyxin B resistance.</title>
        <authorList>
            <person name="Burtnick M.N."/>
            <person name="Woods D.E."/>
        </authorList>
    </citation>
    <scope>NUCLEOTIDE SEQUENCE [GENOMIC DNA]</scope>
    <source>
        <strain>1026b</strain>
    </source>
</reference>
<reference key="2">
    <citation type="journal article" date="2012" name="PLoS ONE">
        <title>Evolution of Burkholderia pseudomallei in recurrent melioidosis.</title>
        <authorList>
            <person name="Hayden H.S."/>
            <person name="Lim R."/>
            <person name="Brittnacher M.J."/>
            <person name="Sims E.H."/>
            <person name="Ramage E.R."/>
            <person name="Fong C."/>
            <person name="Wu Z."/>
            <person name="Crist E."/>
            <person name="Chang J."/>
            <person name="Zhou Y."/>
            <person name="Radey M."/>
            <person name="Rohmer L."/>
            <person name="Haugen E."/>
            <person name="Gillett W."/>
            <person name="Wuthiekanun V."/>
            <person name="Peacock S.J."/>
            <person name="Kaul R."/>
            <person name="Miller S.I."/>
            <person name="Manoil C."/>
            <person name="Jacobs M.A."/>
        </authorList>
    </citation>
    <scope>NUCLEOTIDE SEQUENCE [LARGE SCALE GENOMIC DNA]</scope>
    <source>
        <strain>1026b</strain>
    </source>
</reference>
<evidence type="ECO:0000255" key="1">
    <source>
        <dbReference type="HAMAP-Rule" id="MF_01601"/>
    </source>
</evidence>
<protein>
    <recommendedName>
        <fullName evidence="1">ADP-L-glycero-D-manno-heptose-6-epimerase</fullName>
        <ecNumber evidence="1">5.1.3.20</ecNumber>
    </recommendedName>
    <alternativeName>
        <fullName evidence="1">ADP-L-glycero-beta-D-manno-heptose-6-epimerase</fullName>
        <shortName evidence="1">ADP-glyceromanno-heptose 6-epimerase</shortName>
        <shortName evidence="1">ADP-hep 6-epimerase</shortName>
        <shortName evidence="1">AGME</shortName>
    </alternativeName>
</protein>
<sequence>MTLIVTGAAGFIGANIVKALNERGETRIIAVDNLTRADKFKNLVDCEIDDYLDKTEFVERFARSDFGKVRAVFHEGACSDTMETDGRYMMDNNFRYSRAVLDACLAQGTQFLYASSAAIYGGSSRFVEAREFEAPLNVYGYSKFLFDQVIRRVMPSAKSQIAGFRYFNVYGPRESHKGRMASVAFHNFNQFRAEGKVKLFGEYNGYGPGEQTRDFVSVEDVAKVNLHFFDHPQKSGIFNLGAGRAQPFNDIATTVVNTLRALEGQPALTLAEQVEQGLVEYVPFPDALRGKYQCFTQADQTKLRAAGYDAPFLTVQEGVDRYVRWLFGQL</sequence>
<dbReference type="EC" id="5.1.3.20" evidence="1"/>
<dbReference type="EMBL" id="AF159428">
    <property type="protein sequence ID" value="AAD43346.1"/>
    <property type="molecule type" value="Genomic_DNA"/>
</dbReference>
<dbReference type="EMBL" id="CP002833">
    <property type="protein sequence ID" value="AFI65460.1"/>
    <property type="molecule type" value="Genomic_DNA"/>
</dbReference>
<dbReference type="SMR" id="I1WGR6"/>
<dbReference type="KEGG" id="bpz:BP1026B_I0803"/>
<dbReference type="PATRIC" id="fig|884204.3.peg.880"/>
<dbReference type="UniPathway" id="UPA00356">
    <property type="reaction ID" value="UER00440"/>
</dbReference>
<dbReference type="Proteomes" id="UP000010087">
    <property type="component" value="Chromosome 1"/>
</dbReference>
<dbReference type="GO" id="GO:0008712">
    <property type="term" value="F:ADP-glyceromanno-heptose 6-epimerase activity"/>
    <property type="evidence" value="ECO:0007669"/>
    <property type="project" value="UniProtKB-UniRule"/>
</dbReference>
<dbReference type="GO" id="GO:0050661">
    <property type="term" value="F:NADP binding"/>
    <property type="evidence" value="ECO:0007669"/>
    <property type="project" value="InterPro"/>
</dbReference>
<dbReference type="GO" id="GO:0097171">
    <property type="term" value="P:ADP-L-glycero-beta-D-manno-heptose biosynthetic process"/>
    <property type="evidence" value="ECO:0007669"/>
    <property type="project" value="UniProtKB-UniPathway"/>
</dbReference>
<dbReference type="GO" id="GO:0005975">
    <property type="term" value="P:carbohydrate metabolic process"/>
    <property type="evidence" value="ECO:0007669"/>
    <property type="project" value="UniProtKB-UniRule"/>
</dbReference>
<dbReference type="CDD" id="cd05248">
    <property type="entry name" value="ADP_GME_SDR_e"/>
    <property type="match status" value="1"/>
</dbReference>
<dbReference type="Gene3D" id="3.40.50.720">
    <property type="entry name" value="NAD(P)-binding Rossmann-like Domain"/>
    <property type="match status" value="1"/>
</dbReference>
<dbReference type="Gene3D" id="3.90.25.10">
    <property type="entry name" value="UDP-galactose 4-epimerase, domain 1"/>
    <property type="match status" value="1"/>
</dbReference>
<dbReference type="HAMAP" id="MF_01601">
    <property type="entry name" value="Heptose_epimerase"/>
    <property type="match status" value="1"/>
</dbReference>
<dbReference type="InterPro" id="IPR001509">
    <property type="entry name" value="Epimerase_deHydtase"/>
</dbReference>
<dbReference type="InterPro" id="IPR011912">
    <property type="entry name" value="Heptose_epim"/>
</dbReference>
<dbReference type="InterPro" id="IPR036291">
    <property type="entry name" value="NAD(P)-bd_dom_sf"/>
</dbReference>
<dbReference type="NCBIfam" id="TIGR02197">
    <property type="entry name" value="heptose_epim"/>
    <property type="match status" value="1"/>
</dbReference>
<dbReference type="PANTHER" id="PTHR43103:SF3">
    <property type="entry name" value="ADP-L-GLYCERO-D-MANNO-HEPTOSE-6-EPIMERASE"/>
    <property type="match status" value="1"/>
</dbReference>
<dbReference type="PANTHER" id="PTHR43103">
    <property type="entry name" value="NUCLEOSIDE-DIPHOSPHATE-SUGAR EPIMERASE"/>
    <property type="match status" value="1"/>
</dbReference>
<dbReference type="Pfam" id="PF01370">
    <property type="entry name" value="Epimerase"/>
    <property type="match status" value="1"/>
</dbReference>
<dbReference type="SUPFAM" id="SSF51735">
    <property type="entry name" value="NAD(P)-binding Rossmann-fold domains"/>
    <property type="match status" value="1"/>
</dbReference>
<comment type="function">
    <text evidence="1">Catalyzes the interconversion between ADP-D-glycero-beta-D-manno-heptose and ADP-L-glycero-beta-D-manno-heptose via an epimerization at carbon 6 of the heptose.</text>
</comment>
<comment type="catalytic activity">
    <reaction evidence="1">
        <text>ADP-D-glycero-beta-D-manno-heptose = ADP-L-glycero-beta-D-manno-heptose</text>
        <dbReference type="Rhea" id="RHEA:17577"/>
        <dbReference type="ChEBI" id="CHEBI:59967"/>
        <dbReference type="ChEBI" id="CHEBI:61506"/>
        <dbReference type="EC" id="5.1.3.20"/>
    </reaction>
</comment>
<comment type="cofactor">
    <cofactor evidence="1">
        <name>NADP(+)</name>
        <dbReference type="ChEBI" id="CHEBI:58349"/>
    </cofactor>
    <text evidence="1">Binds 1 NADP(+) per subunit.</text>
</comment>
<comment type="pathway">
    <text evidence="1">Nucleotide-sugar biosynthesis; ADP-L-glycero-beta-D-manno-heptose biosynthesis; ADP-L-glycero-beta-D-manno-heptose from D-glycero-beta-D-manno-heptose 7-phosphate: step 4/4.</text>
</comment>
<comment type="subunit">
    <text evidence="1">Homopentamer.</text>
</comment>
<comment type="domain">
    <text evidence="1">Contains a large N-terminal NADP-binding domain, and a smaller C-terminal substrate-binding domain.</text>
</comment>
<comment type="similarity">
    <text evidence="1">Belongs to the NAD(P)-dependent epimerase/dehydratase family. HldD subfamily.</text>
</comment>
<gene>
    <name evidence="1" type="primary">hldD</name>
    <name type="synonym">gmhD</name>
    <name type="ordered locus">BP1026B_I0803</name>
</gene>